<accession>Q8C2A2</accession>
<accession>B1ATA4</accession>
<accession>B1ATA5</accession>
<accession>Q9DCI5</accession>
<gene>
    <name type="primary">Tsen54</name>
    <name type="synonym">Sen54</name>
</gene>
<dbReference type="EMBL" id="AK002758">
    <property type="protein sequence ID" value="BAB22335.1"/>
    <property type="molecule type" value="mRNA"/>
</dbReference>
<dbReference type="EMBL" id="AK089005">
    <property type="protein sequence ID" value="BAC40696.1"/>
    <property type="molecule type" value="mRNA"/>
</dbReference>
<dbReference type="EMBL" id="AL645852">
    <property type="status" value="NOT_ANNOTATED_CDS"/>
    <property type="molecule type" value="Genomic_DNA"/>
</dbReference>
<dbReference type="CCDS" id="CCDS25648.1">
    <molecule id="Q8C2A2-1"/>
</dbReference>
<dbReference type="RefSeq" id="NP_083833.1">
    <molecule id="Q8C2A2-1"/>
    <property type="nucleotide sequence ID" value="NM_029557.1"/>
</dbReference>
<dbReference type="SMR" id="Q8C2A2"/>
<dbReference type="FunCoup" id="Q8C2A2">
    <property type="interactions" value="562"/>
</dbReference>
<dbReference type="STRING" id="10090.ENSMUSP00000021134"/>
<dbReference type="iPTMnet" id="Q8C2A2"/>
<dbReference type="PhosphoSitePlus" id="Q8C2A2"/>
<dbReference type="PaxDb" id="10090-ENSMUSP00000021134"/>
<dbReference type="ProteomicsDB" id="256958">
    <molecule id="Q8C2A2-1"/>
</dbReference>
<dbReference type="ProteomicsDB" id="256959">
    <molecule id="Q8C2A2-2"/>
</dbReference>
<dbReference type="Pumba" id="Q8C2A2"/>
<dbReference type="Antibodypedia" id="32191">
    <property type="antibodies" value="57 antibodies from 20 providers"/>
</dbReference>
<dbReference type="Ensembl" id="ENSMUST00000021134.10">
    <molecule id="Q8C2A2-1"/>
    <property type="protein sequence ID" value="ENSMUSP00000021134.4"/>
    <property type="gene ID" value="ENSMUSG00000020781.15"/>
</dbReference>
<dbReference type="Ensembl" id="ENSMUST00000106481.9">
    <molecule id="Q8C2A2-2"/>
    <property type="protein sequence ID" value="ENSMUSP00000102090.3"/>
    <property type="gene ID" value="ENSMUSG00000020781.15"/>
</dbReference>
<dbReference type="GeneID" id="76265"/>
<dbReference type="KEGG" id="mmu:76265"/>
<dbReference type="UCSC" id="uc007miq.1">
    <molecule id="Q8C2A2-1"/>
    <property type="organism name" value="mouse"/>
</dbReference>
<dbReference type="UCSC" id="uc011yhp.1">
    <molecule id="Q8C2A2-2"/>
    <property type="organism name" value="mouse"/>
</dbReference>
<dbReference type="AGR" id="MGI:1923515"/>
<dbReference type="CTD" id="283989"/>
<dbReference type="MGI" id="MGI:1923515">
    <property type="gene designation" value="Tsen54"/>
</dbReference>
<dbReference type="VEuPathDB" id="HostDB:ENSMUSG00000020781"/>
<dbReference type="eggNOG" id="KOG4772">
    <property type="taxonomic scope" value="Eukaryota"/>
</dbReference>
<dbReference type="GeneTree" id="ENSGT00390000004214"/>
<dbReference type="HOGENOM" id="CLU_033069_1_0_1"/>
<dbReference type="InParanoid" id="Q8C2A2"/>
<dbReference type="OMA" id="AMVLQHI"/>
<dbReference type="OrthoDB" id="408683at2759"/>
<dbReference type="PhylomeDB" id="Q8C2A2"/>
<dbReference type="TreeFam" id="TF314691"/>
<dbReference type="BioGRID-ORCS" id="76265">
    <property type="hits" value="26 hits in 80 CRISPR screens"/>
</dbReference>
<dbReference type="ChiTaRS" id="Tsen54">
    <property type="organism name" value="mouse"/>
</dbReference>
<dbReference type="PRO" id="PR:Q8C2A2"/>
<dbReference type="Proteomes" id="UP000000589">
    <property type="component" value="Chromosome 11"/>
</dbReference>
<dbReference type="RNAct" id="Q8C2A2">
    <property type="molecule type" value="protein"/>
</dbReference>
<dbReference type="Bgee" id="ENSMUSG00000020781">
    <property type="expression patterns" value="Expressed in yolk sac and 168 other cell types or tissues"/>
</dbReference>
<dbReference type="ExpressionAtlas" id="Q8C2A2">
    <property type="expression patterns" value="baseline and differential"/>
</dbReference>
<dbReference type="GO" id="GO:0005730">
    <property type="term" value="C:nucleolus"/>
    <property type="evidence" value="ECO:0007669"/>
    <property type="project" value="UniProtKB-SubCell"/>
</dbReference>
<dbReference type="GO" id="GO:0006397">
    <property type="term" value="P:mRNA processing"/>
    <property type="evidence" value="ECO:0007669"/>
    <property type="project" value="UniProtKB-KW"/>
</dbReference>
<dbReference type="GO" id="GO:0006388">
    <property type="term" value="P:tRNA splicing, via endonucleolytic cleavage and ligation"/>
    <property type="evidence" value="ECO:0007669"/>
    <property type="project" value="Ensembl"/>
</dbReference>
<dbReference type="Gene3D" id="3.40.1350.150">
    <property type="match status" value="1"/>
</dbReference>
<dbReference type="InterPro" id="IPR024337">
    <property type="entry name" value="tRNA_splic_suSen54"/>
</dbReference>
<dbReference type="InterPro" id="IPR024336">
    <property type="entry name" value="tRNA_splic_suSen54_N"/>
</dbReference>
<dbReference type="PANTHER" id="PTHR21027">
    <property type="entry name" value="TRNA-SPLICING ENDONUCLEASE SUBUNIT SEN54"/>
    <property type="match status" value="1"/>
</dbReference>
<dbReference type="PANTHER" id="PTHR21027:SF1">
    <property type="entry name" value="TRNA-SPLICING ENDONUCLEASE SUBUNIT SEN54"/>
    <property type="match status" value="1"/>
</dbReference>
<dbReference type="Pfam" id="PF12928">
    <property type="entry name" value="tRNA_int_end_N2"/>
    <property type="match status" value="1"/>
</dbReference>
<reference key="1">
    <citation type="journal article" date="2005" name="Science">
        <title>The transcriptional landscape of the mammalian genome.</title>
        <authorList>
            <person name="Carninci P."/>
            <person name="Kasukawa T."/>
            <person name="Katayama S."/>
            <person name="Gough J."/>
            <person name="Frith M.C."/>
            <person name="Maeda N."/>
            <person name="Oyama R."/>
            <person name="Ravasi T."/>
            <person name="Lenhard B."/>
            <person name="Wells C."/>
            <person name="Kodzius R."/>
            <person name="Shimokawa K."/>
            <person name="Bajic V.B."/>
            <person name="Brenner S.E."/>
            <person name="Batalov S."/>
            <person name="Forrest A.R."/>
            <person name="Zavolan M."/>
            <person name="Davis M.J."/>
            <person name="Wilming L.G."/>
            <person name="Aidinis V."/>
            <person name="Allen J.E."/>
            <person name="Ambesi-Impiombato A."/>
            <person name="Apweiler R."/>
            <person name="Aturaliya R.N."/>
            <person name="Bailey T.L."/>
            <person name="Bansal M."/>
            <person name="Baxter L."/>
            <person name="Beisel K.W."/>
            <person name="Bersano T."/>
            <person name="Bono H."/>
            <person name="Chalk A.M."/>
            <person name="Chiu K.P."/>
            <person name="Choudhary V."/>
            <person name="Christoffels A."/>
            <person name="Clutterbuck D.R."/>
            <person name="Crowe M.L."/>
            <person name="Dalla E."/>
            <person name="Dalrymple B.P."/>
            <person name="de Bono B."/>
            <person name="Della Gatta G."/>
            <person name="di Bernardo D."/>
            <person name="Down T."/>
            <person name="Engstrom P."/>
            <person name="Fagiolini M."/>
            <person name="Faulkner G."/>
            <person name="Fletcher C.F."/>
            <person name="Fukushima T."/>
            <person name="Furuno M."/>
            <person name="Futaki S."/>
            <person name="Gariboldi M."/>
            <person name="Georgii-Hemming P."/>
            <person name="Gingeras T.R."/>
            <person name="Gojobori T."/>
            <person name="Green R.E."/>
            <person name="Gustincich S."/>
            <person name="Harbers M."/>
            <person name="Hayashi Y."/>
            <person name="Hensch T.K."/>
            <person name="Hirokawa N."/>
            <person name="Hill D."/>
            <person name="Huminiecki L."/>
            <person name="Iacono M."/>
            <person name="Ikeo K."/>
            <person name="Iwama A."/>
            <person name="Ishikawa T."/>
            <person name="Jakt M."/>
            <person name="Kanapin A."/>
            <person name="Katoh M."/>
            <person name="Kawasawa Y."/>
            <person name="Kelso J."/>
            <person name="Kitamura H."/>
            <person name="Kitano H."/>
            <person name="Kollias G."/>
            <person name="Krishnan S.P."/>
            <person name="Kruger A."/>
            <person name="Kummerfeld S.K."/>
            <person name="Kurochkin I.V."/>
            <person name="Lareau L.F."/>
            <person name="Lazarevic D."/>
            <person name="Lipovich L."/>
            <person name="Liu J."/>
            <person name="Liuni S."/>
            <person name="McWilliam S."/>
            <person name="Madan Babu M."/>
            <person name="Madera M."/>
            <person name="Marchionni L."/>
            <person name="Matsuda H."/>
            <person name="Matsuzawa S."/>
            <person name="Miki H."/>
            <person name="Mignone F."/>
            <person name="Miyake S."/>
            <person name="Morris K."/>
            <person name="Mottagui-Tabar S."/>
            <person name="Mulder N."/>
            <person name="Nakano N."/>
            <person name="Nakauchi H."/>
            <person name="Ng P."/>
            <person name="Nilsson R."/>
            <person name="Nishiguchi S."/>
            <person name="Nishikawa S."/>
            <person name="Nori F."/>
            <person name="Ohara O."/>
            <person name="Okazaki Y."/>
            <person name="Orlando V."/>
            <person name="Pang K.C."/>
            <person name="Pavan W.J."/>
            <person name="Pavesi G."/>
            <person name="Pesole G."/>
            <person name="Petrovsky N."/>
            <person name="Piazza S."/>
            <person name="Reed J."/>
            <person name="Reid J.F."/>
            <person name="Ring B.Z."/>
            <person name="Ringwald M."/>
            <person name="Rost B."/>
            <person name="Ruan Y."/>
            <person name="Salzberg S.L."/>
            <person name="Sandelin A."/>
            <person name="Schneider C."/>
            <person name="Schoenbach C."/>
            <person name="Sekiguchi K."/>
            <person name="Semple C.A."/>
            <person name="Seno S."/>
            <person name="Sessa L."/>
            <person name="Sheng Y."/>
            <person name="Shibata Y."/>
            <person name="Shimada H."/>
            <person name="Shimada K."/>
            <person name="Silva D."/>
            <person name="Sinclair B."/>
            <person name="Sperling S."/>
            <person name="Stupka E."/>
            <person name="Sugiura K."/>
            <person name="Sultana R."/>
            <person name="Takenaka Y."/>
            <person name="Taki K."/>
            <person name="Tammoja K."/>
            <person name="Tan S.L."/>
            <person name="Tang S."/>
            <person name="Taylor M.S."/>
            <person name="Tegner J."/>
            <person name="Teichmann S.A."/>
            <person name="Ueda H.R."/>
            <person name="van Nimwegen E."/>
            <person name="Verardo R."/>
            <person name="Wei C.L."/>
            <person name="Yagi K."/>
            <person name="Yamanishi H."/>
            <person name="Zabarovsky E."/>
            <person name="Zhu S."/>
            <person name="Zimmer A."/>
            <person name="Hide W."/>
            <person name="Bult C."/>
            <person name="Grimmond S.M."/>
            <person name="Teasdale R.D."/>
            <person name="Liu E.T."/>
            <person name="Brusic V."/>
            <person name="Quackenbush J."/>
            <person name="Wahlestedt C."/>
            <person name="Mattick J.S."/>
            <person name="Hume D.A."/>
            <person name="Kai C."/>
            <person name="Sasaki D."/>
            <person name="Tomaru Y."/>
            <person name="Fukuda S."/>
            <person name="Kanamori-Katayama M."/>
            <person name="Suzuki M."/>
            <person name="Aoki J."/>
            <person name="Arakawa T."/>
            <person name="Iida J."/>
            <person name="Imamura K."/>
            <person name="Itoh M."/>
            <person name="Kato T."/>
            <person name="Kawaji H."/>
            <person name="Kawagashira N."/>
            <person name="Kawashima T."/>
            <person name="Kojima M."/>
            <person name="Kondo S."/>
            <person name="Konno H."/>
            <person name="Nakano K."/>
            <person name="Ninomiya N."/>
            <person name="Nishio T."/>
            <person name="Okada M."/>
            <person name="Plessy C."/>
            <person name="Shibata K."/>
            <person name="Shiraki T."/>
            <person name="Suzuki S."/>
            <person name="Tagami M."/>
            <person name="Waki K."/>
            <person name="Watahiki A."/>
            <person name="Okamura-Oho Y."/>
            <person name="Suzuki H."/>
            <person name="Kawai J."/>
            <person name="Hayashizaki Y."/>
        </authorList>
    </citation>
    <scope>NUCLEOTIDE SEQUENCE [LARGE SCALE MRNA] (ISOFORM 1)</scope>
    <scope>NUCLEOTIDE SEQUENCE [LARGE SCALE MRNA] OF 4-525 (ISOFORM 2)</scope>
    <source>
        <strain>C57BL/6J</strain>
        <strain>NOD</strain>
        <tissue>Kidney</tissue>
        <tissue>Thymus</tissue>
    </source>
</reference>
<reference key="2">
    <citation type="journal article" date="2009" name="PLoS Biol.">
        <title>Lineage-specific biology revealed by a finished genome assembly of the mouse.</title>
        <authorList>
            <person name="Church D.M."/>
            <person name="Goodstadt L."/>
            <person name="Hillier L.W."/>
            <person name="Zody M.C."/>
            <person name="Goldstein S."/>
            <person name="She X."/>
            <person name="Bult C.J."/>
            <person name="Agarwala R."/>
            <person name="Cherry J.L."/>
            <person name="DiCuccio M."/>
            <person name="Hlavina W."/>
            <person name="Kapustin Y."/>
            <person name="Meric P."/>
            <person name="Maglott D."/>
            <person name="Birtle Z."/>
            <person name="Marques A.C."/>
            <person name="Graves T."/>
            <person name="Zhou S."/>
            <person name="Teague B."/>
            <person name="Potamousis K."/>
            <person name="Churas C."/>
            <person name="Place M."/>
            <person name="Herschleb J."/>
            <person name="Runnheim R."/>
            <person name="Forrest D."/>
            <person name="Amos-Landgraf J."/>
            <person name="Schwartz D.C."/>
            <person name="Cheng Z."/>
            <person name="Lindblad-Toh K."/>
            <person name="Eichler E.E."/>
            <person name="Ponting C.P."/>
        </authorList>
    </citation>
    <scope>NUCLEOTIDE SEQUENCE [LARGE SCALE GENOMIC DNA]</scope>
    <source>
        <strain>C57BL/6J</strain>
    </source>
</reference>
<feature type="chain" id="PRO_0000194030" description="tRNA-splicing endonuclease subunit Sen54">
    <location>
        <begin position="1"/>
        <end position="525"/>
    </location>
</feature>
<feature type="region of interest" description="Disordered" evidence="3">
    <location>
        <begin position="1"/>
        <end position="46"/>
    </location>
</feature>
<feature type="region of interest" description="Disordered" evidence="3">
    <location>
        <begin position="220"/>
        <end position="273"/>
    </location>
</feature>
<feature type="compositionally biased region" description="Low complexity" evidence="3">
    <location>
        <begin position="7"/>
        <end position="23"/>
    </location>
</feature>
<feature type="compositionally biased region" description="Low complexity" evidence="3">
    <location>
        <begin position="220"/>
        <end position="232"/>
    </location>
</feature>
<feature type="modified residue" description="N-acetylmethionine" evidence="2">
    <location>
        <position position="1"/>
    </location>
</feature>
<feature type="modified residue" description="Phosphoserine" evidence="2">
    <location>
        <position position="178"/>
    </location>
</feature>
<feature type="modified residue" description="Phosphotyrosine" evidence="2">
    <location>
        <position position="180"/>
    </location>
</feature>
<feature type="splice variant" id="VSP_010990" description="In isoform 2." evidence="4">
    <location>
        <begin position="438"/>
        <end position="476"/>
    </location>
</feature>
<feature type="sequence conflict" description="In Ref. 1; BAC40696." evidence="5" ref="1">
    <original>S</original>
    <variation>P</variation>
    <location>
        <position position="244"/>
    </location>
</feature>
<protein>
    <recommendedName>
        <fullName>tRNA-splicing endonuclease subunit Sen54</fullName>
    </recommendedName>
    <alternativeName>
        <fullName>tRNA-intron endonuclease Sen54</fullName>
    </alternativeName>
</protein>
<sequence>MEPEPEPGSVEVPAGRVLSASELRAARSRSQKLPQRSHGPKDFLPDGSEAQAERLRLCRQELWQLLAEERVERLGSLVAAEWKPEEGFVELTSPAGKFWQTMGYSEEGRQRLHPEEALYLLECGSIQLFYQDLPLSIQEAYQLLLTEDTLSFLQYQVFSHLKRLGYVVRRFQLSSVVSPYERQLNLDGYAQCLEDGSGKRKRSSSCRSVNKKPKVLQNSLPPVSLAASSSPACDQSSQYPEEKSQDSSPRQGSELPLQFLGSSEPCSDLAREDVGCDRESHKIENGAKGTPKLRWNFEQISFPNMASDSRHTFLPAPAPELLPANVIGRGTDAESWCQKLNQRREKLSRRDREQQAVVQQFREDVNADPEVRGCSSWQEYKELLQRRQTQKSQPRPPHLWGQSVTPLLDPDKADCPAAVLQHISVLQTTHLADGGYRLLEKSGGLQISFDVYQADAVATFRKNSPGKPYVRMCISGFDDPVPDLCSLKCLTYQSGDVPLIFALVDHGDISFYSFRDFTLPRDLGH</sequence>
<keyword id="KW-0007">Acetylation</keyword>
<keyword id="KW-0025">Alternative splicing</keyword>
<keyword id="KW-0507">mRNA processing</keyword>
<keyword id="KW-0539">Nucleus</keyword>
<keyword id="KW-0597">Phosphoprotein</keyword>
<keyword id="KW-1185">Reference proteome</keyword>
<keyword id="KW-0819">tRNA processing</keyword>
<comment type="function">
    <text evidence="1">Non-catalytic subunit of the tRNA-splicing endonuclease complex, a complex responsible for identification and cleavage of the splice sites in pre-tRNA. It cleaves pre-tRNA at the 5' and 3' splice sites to release the intron. The products are an intron and two tRNA half-molecules bearing 2',3' cyclic phosphate and 5'-OH termini. There are no conserved sequences at the splice sites, but the intron is invariably located at the same site in the gene, placing the splice sites an invariant distance from the constant structural features of the tRNA body. The tRNA splicing endonuclease is also involved in mRNA processing via its association with pre-mRNA 3'-end processing factors, establishing a link between pre-tRNA splicing and pre-mRNA 3'-end formation, suggesting that the endonuclease subunits function in multiple RNA-processing events (By similarity).</text>
</comment>
<comment type="subunit">
    <text evidence="1">tRNA splicing endonuclease is a heterotetramer composed of TSEN2, TSEN15, TSEN34/LENG5 and TSEN54. tRNA splicing endonuclease complex also contains proteins of the pre-mRNA 3'-end processing machinery such as CLP1, CPSF1, CPSF4 and CSTF2 (By similarity).</text>
</comment>
<comment type="subcellular location">
    <subcellularLocation>
        <location evidence="5">Nucleus</location>
    </subcellularLocation>
    <subcellularLocation>
        <location evidence="5">Nucleus</location>
        <location evidence="5">Nucleolus</location>
    </subcellularLocation>
    <text evidence="5">May be transiently localized in the nucleolus.</text>
</comment>
<comment type="alternative products">
    <event type="alternative splicing"/>
    <isoform>
        <id>Q8C2A2-1</id>
        <name>1</name>
        <sequence type="displayed"/>
    </isoform>
    <isoform>
        <id>Q8C2A2-2</id>
        <name>2</name>
        <sequence type="described" ref="VSP_010990"/>
    </isoform>
</comment>
<comment type="similarity">
    <text evidence="5">Belongs to the SEN54 family.</text>
</comment>
<evidence type="ECO:0000250" key="1"/>
<evidence type="ECO:0000250" key="2">
    <source>
        <dbReference type="UniProtKB" id="Q7Z6J9"/>
    </source>
</evidence>
<evidence type="ECO:0000256" key="3">
    <source>
        <dbReference type="SAM" id="MobiDB-lite"/>
    </source>
</evidence>
<evidence type="ECO:0000303" key="4">
    <source>
    </source>
</evidence>
<evidence type="ECO:0000305" key="5"/>
<organism>
    <name type="scientific">Mus musculus</name>
    <name type="common">Mouse</name>
    <dbReference type="NCBI Taxonomy" id="10090"/>
    <lineage>
        <taxon>Eukaryota</taxon>
        <taxon>Metazoa</taxon>
        <taxon>Chordata</taxon>
        <taxon>Craniata</taxon>
        <taxon>Vertebrata</taxon>
        <taxon>Euteleostomi</taxon>
        <taxon>Mammalia</taxon>
        <taxon>Eutheria</taxon>
        <taxon>Euarchontoglires</taxon>
        <taxon>Glires</taxon>
        <taxon>Rodentia</taxon>
        <taxon>Myomorpha</taxon>
        <taxon>Muroidea</taxon>
        <taxon>Muridae</taxon>
        <taxon>Murinae</taxon>
        <taxon>Mus</taxon>
        <taxon>Mus</taxon>
    </lineage>
</organism>
<name>SEN54_MOUSE</name>
<proteinExistence type="evidence at transcript level"/>